<accession>Q0C643</accession>
<name>HIS6_HYPNA</name>
<organism>
    <name type="scientific">Hyphomonas neptunium (strain ATCC 15444)</name>
    <dbReference type="NCBI Taxonomy" id="228405"/>
    <lineage>
        <taxon>Bacteria</taxon>
        <taxon>Pseudomonadati</taxon>
        <taxon>Pseudomonadota</taxon>
        <taxon>Alphaproteobacteria</taxon>
        <taxon>Hyphomonadales</taxon>
        <taxon>Hyphomonadaceae</taxon>
        <taxon>Hyphomonas</taxon>
    </lineage>
</organism>
<proteinExistence type="inferred from homology"/>
<protein>
    <recommendedName>
        <fullName evidence="1">Imidazole glycerol phosphate synthase subunit HisF</fullName>
        <ecNumber evidence="1">4.3.2.10</ecNumber>
    </recommendedName>
    <alternativeName>
        <fullName evidence="1">IGP synthase cyclase subunit</fullName>
    </alternativeName>
    <alternativeName>
        <fullName evidence="1">IGP synthase subunit HisF</fullName>
    </alternativeName>
    <alternativeName>
        <fullName evidence="1">ImGP synthase subunit HisF</fullName>
        <shortName evidence="1">IGPS subunit HisF</shortName>
    </alternativeName>
</protein>
<evidence type="ECO:0000255" key="1">
    <source>
        <dbReference type="HAMAP-Rule" id="MF_01013"/>
    </source>
</evidence>
<comment type="function">
    <text evidence="1">IGPS catalyzes the conversion of PRFAR and glutamine to IGP, AICAR and glutamate. The HisF subunit catalyzes the cyclization activity that produces IGP and AICAR from PRFAR using the ammonia provided by the HisH subunit.</text>
</comment>
<comment type="catalytic activity">
    <reaction evidence="1">
        <text>5-[(5-phospho-1-deoxy-D-ribulos-1-ylimino)methylamino]-1-(5-phospho-beta-D-ribosyl)imidazole-4-carboxamide + L-glutamine = D-erythro-1-(imidazol-4-yl)glycerol 3-phosphate + 5-amino-1-(5-phospho-beta-D-ribosyl)imidazole-4-carboxamide + L-glutamate + H(+)</text>
        <dbReference type="Rhea" id="RHEA:24793"/>
        <dbReference type="ChEBI" id="CHEBI:15378"/>
        <dbReference type="ChEBI" id="CHEBI:29985"/>
        <dbReference type="ChEBI" id="CHEBI:58278"/>
        <dbReference type="ChEBI" id="CHEBI:58359"/>
        <dbReference type="ChEBI" id="CHEBI:58475"/>
        <dbReference type="ChEBI" id="CHEBI:58525"/>
        <dbReference type="EC" id="4.3.2.10"/>
    </reaction>
</comment>
<comment type="pathway">
    <text evidence="1">Amino-acid biosynthesis; L-histidine biosynthesis; L-histidine from 5-phospho-alpha-D-ribose 1-diphosphate: step 5/9.</text>
</comment>
<comment type="subunit">
    <text evidence="1">Heterodimer of HisH and HisF.</text>
</comment>
<comment type="subcellular location">
    <subcellularLocation>
        <location evidence="1">Cytoplasm</location>
    </subcellularLocation>
</comment>
<comment type="similarity">
    <text evidence="1">Belongs to the HisA/HisF family.</text>
</comment>
<dbReference type="EC" id="4.3.2.10" evidence="1"/>
<dbReference type="EMBL" id="CP000158">
    <property type="protein sequence ID" value="ABI75856.1"/>
    <property type="molecule type" value="Genomic_DNA"/>
</dbReference>
<dbReference type="RefSeq" id="WP_011645100.1">
    <property type="nucleotide sequence ID" value="NC_008358.1"/>
</dbReference>
<dbReference type="SMR" id="Q0C643"/>
<dbReference type="STRING" id="228405.HNE_0066"/>
<dbReference type="KEGG" id="hne:HNE_0066"/>
<dbReference type="eggNOG" id="COG0107">
    <property type="taxonomic scope" value="Bacteria"/>
</dbReference>
<dbReference type="HOGENOM" id="CLU_048577_4_0_5"/>
<dbReference type="UniPathway" id="UPA00031">
    <property type="reaction ID" value="UER00010"/>
</dbReference>
<dbReference type="Proteomes" id="UP000001959">
    <property type="component" value="Chromosome"/>
</dbReference>
<dbReference type="GO" id="GO:0005737">
    <property type="term" value="C:cytoplasm"/>
    <property type="evidence" value="ECO:0007669"/>
    <property type="project" value="UniProtKB-SubCell"/>
</dbReference>
<dbReference type="GO" id="GO:0000107">
    <property type="term" value="F:imidazoleglycerol-phosphate synthase activity"/>
    <property type="evidence" value="ECO:0007669"/>
    <property type="project" value="UniProtKB-UniRule"/>
</dbReference>
<dbReference type="GO" id="GO:0016829">
    <property type="term" value="F:lyase activity"/>
    <property type="evidence" value="ECO:0007669"/>
    <property type="project" value="UniProtKB-KW"/>
</dbReference>
<dbReference type="GO" id="GO:0000105">
    <property type="term" value="P:L-histidine biosynthetic process"/>
    <property type="evidence" value="ECO:0007669"/>
    <property type="project" value="UniProtKB-UniRule"/>
</dbReference>
<dbReference type="CDD" id="cd04731">
    <property type="entry name" value="HisF"/>
    <property type="match status" value="1"/>
</dbReference>
<dbReference type="FunFam" id="3.20.20.70:FF:000006">
    <property type="entry name" value="Imidazole glycerol phosphate synthase subunit HisF"/>
    <property type="match status" value="1"/>
</dbReference>
<dbReference type="Gene3D" id="3.20.20.70">
    <property type="entry name" value="Aldolase class I"/>
    <property type="match status" value="1"/>
</dbReference>
<dbReference type="HAMAP" id="MF_01013">
    <property type="entry name" value="HisF"/>
    <property type="match status" value="1"/>
</dbReference>
<dbReference type="InterPro" id="IPR013785">
    <property type="entry name" value="Aldolase_TIM"/>
</dbReference>
<dbReference type="InterPro" id="IPR006062">
    <property type="entry name" value="His_biosynth"/>
</dbReference>
<dbReference type="InterPro" id="IPR004651">
    <property type="entry name" value="HisF"/>
</dbReference>
<dbReference type="InterPro" id="IPR050064">
    <property type="entry name" value="IGPS_HisA/HisF"/>
</dbReference>
<dbReference type="InterPro" id="IPR011060">
    <property type="entry name" value="RibuloseP-bd_barrel"/>
</dbReference>
<dbReference type="NCBIfam" id="TIGR00735">
    <property type="entry name" value="hisF"/>
    <property type="match status" value="1"/>
</dbReference>
<dbReference type="PANTHER" id="PTHR21235:SF2">
    <property type="entry name" value="IMIDAZOLE GLYCEROL PHOSPHATE SYNTHASE HISHF"/>
    <property type="match status" value="1"/>
</dbReference>
<dbReference type="PANTHER" id="PTHR21235">
    <property type="entry name" value="IMIDAZOLE GLYCEROL PHOSPHATE SYNTHASE SUBUNIT HISF/H IGP SYNTHASE SUBUNIT HISF/H"/>
    <property type="match status" value="1"/>
</dbReference>
<dbReference type="Pfam" id="PF00977">
    <property type="entry name" value="His_biosynth"/>
    <property type="match status" value="1"/>
</dbReference>
<dbReference type="SUPFAM" id="SSF51366">
    <property type="entry name" value="Ribulose-phoshate binding barrel"/>
    <property type="match status" value="1"/>
</dbReference>
<gene>
    <name evidence="1" type="primary">hisF</name>
    <name type="ordered locus">HNE_0066</name>
</gene>
<feature type="chain" id="PRO_1000063069" description="Imidazole glycerol phosphate synthase subunit HisF">
    <location>
        <begin position="1"/>
        <end position="252"/>
    </location>
</feature>
<feature type="active site" evidence="1">
    <location>
        <position position="11"/>
    </location>
</feature>
<feature type="active site" evidence="1">
    <location>
        <position position="130"/>
    </location>
</feature>
<sequence>MLKTRIIPCLDVKDGRTVKGVNFVDLKDAGDPVALARAYDAAGADELCFLDITASHEGRGTLLETVSRTAEACFMPLTVGGGVRSVEDMVALLRAGADKVAINSAAVADPALVSACAAKAGRQCVVVAIDARAVGDSWEIFTHGGRKATGINAVEFAREAAKRGAGEILLTSMDRDGTKSGYDIPLLKAVSSAVTIPVIASGGAGSVEDFAPAVLEGGASAVLAASIFHFGEASLAEARAALAKAGAPVRTV</sequence>
<keyword id="KW-0028">Amino-acid biosynthesis</keyword>
<keyword id="KW-0963">Cytoplasm</keyword>
<keyword id="KW-0368">Histidine biosynthesis</keyword>
<keyword id="KW-0456">Lyase</keyword>
<keyword id="KW-1185">Reference proteome</keyword>
<reference key="1">
    <citation type="journal article" date="2006" name="J. Bacteriol.">
        <title>Comparative genomic evidence for a close relationship between the dimorphic prosthecate bacteria Hyphomonas neptunium and Caulobacter crescentus.</title>
        <authorList>
            <person name="Badger J.H."/>
            <person name="Hoover T.R."/>
            <person name="Brun Y.V."/>
            <person name="Weiner R.M."/>
            <person name="Laub M.T."/>
            <person name="Alexandre G."/>
            <person name="Mrazek J."/>
            <person name="Ren Q."/>
            <person name="Paulsen I.T."/>
            <person name="Nelson K.E."/>
            <person name="Khouri H.M."/>
            <person name="Radune D."/>
            <person name="Sosa J."/>
            <person name="Dodson R.J."/>
            <person name="Sullivan S.A."/>
            <person name="Rosovitz M.J."/>
            <person name="Madupu R."/>
            <person name="Brinkac L.M."/>
            <person name="Durkin A.S."/>
            <person name="Daugherty S.C."/>
            <person name="Kothari S.P."/>
            <person name="Giglio M.G."/>
            <person name="Zhou L."/>
            <person name="Haft D.H."/>
            <person name="Selengut J.D."/>
            <person name="Davidsen T.M."/>
            <person name="Yang Q."/>
            <person name="Zafar N."/>
            <person name="Ward N.L."/>
        </authorList>
    </citation>
    <scope>NUCLEOTIDE SEQUENCE [LARGE SCALE GENOMIC DNA]</scope>
    <source>
        <strain>ATCC 15444</strain>
    </source>
</reference>